<proteinExistence type="inferred from homology"/>
<protein>
    <recommendedName>
        <fullName>FMN-dependent NADPH-azoreductase</fullName>
        <ecNumber>1.7.-.-</ecNumber>
    </recommendedName>
    <alternativeName>
        <fullName>NADPH-dependent flavo-azoreductase</fullName>
    </alternativeName>
    <alternativeName>
        <fullName>NADPH-flavin azoreductase</fullName>
    </alternativeName>
</protein>
<evidence type="ECO:0000250" key="1"/>
<evidence type="ECO:0000305" key="2"/>
<sequence length="188" mass="20724">MKGLIIVGSAKVGSHTNALAKYLVGQFDTHDLDVDIYDLAERPLNQLDFSGTTPSIDEIKTNIKDFQEKVMAADFLVLGTPNYHGSYSGILKNALDHINMDYVKMKPVGLIGNSGGIVSSEPLSHLRVIVRSLLGIAVPTQIATHDSDYSKLDDGTLYLDDDQFQLRAKLFVDQIVSFVNNSPYEHLK</sequence>
<accession>Q4L3N6</accession>
<name>AZO1_STAHJ</name>
<gene>
    <name type="primary">azo1</name>
    <name type="ordered locus">SH2432</name>
</gene>
<dbReference type="EC" id="1.7.-.-"/>
<dbReference type="EMBL" id="AP006716">
    <property type="protein sequence ID" value="BAE05741.1"/>
    <property type="molecule type" value="Genomic_DNA"/>
</dbReference>
<dbReference type="RefSeq" id="WP_011276686.1">
    <property type="nucleotide sequence ID" value="NC_007168.1"/>
</dbReference>
<dbReference type="SMR" id="Q4L3N6"/>
<dbReference type="KEGG" id="sha:SH2432"/>
<dbReference type="eggNOG" id="COG0431">
    <property type="taxonomic scope" value="Bacteria"/>
</dbReference>
<dbReference type="HOGENOM" id="CLU_055322_1_2_9"/>
<dbReference type="OrthoDB" id="9790975at2"/>
<dbReference type="Proteomes" id="UP000000543">
    <property type="component" value="Chromosome"/>
</dbReference>
<dbReference type="GO" id="GO:0005829">
    <property type="term" value="C:cytosol"/>
    <property type="evidence" value="ECO:0007669"/>
    <property type="project" value="TreeGrafter"/>
</dbReference>
<dbReference type="GO" id="GO:0010181">
    <property type="term" value="F:FMN binding"/>
    <property type="evidence" value="ECO:0007669"/>
    <property type="project" value="TreeGrafter"/>
</dbReference>
<dbReference type="GO" id="GO:0016491">
    <property type="term" value="F:oxidoreductase activity"/>
    <property type="evidence" value="ECO:0007669"/>
    <property type="project" value="UniProtKB-KW"/>
</dbReference>
<dbReference type="Gene3D" id="3.40.50.360">
    <property type="match status" value="1"/>
</dbReference>
<dbReference type="InterPro" id="IPR029039">
    <property type="entry name" value="Flavoprotein-like_sf"/>
</dbReference>
<dbReference type="InterPro" id="IPR005025">
    <property type="entry name" value="FMN_Rdtase-like_dom"/>
</dbReference>
<dbReference type="InterPro" id="IPR050712">
    <property type="entry name" value="NAD(P)H-dep_reductase"/>
</dbReference>
<dbReference type="PANTHER" id="PTHR30543">
    <property type="entry name" value="CHROMATE REDUCTASE"/>
    <property type="match status" value="1"/>
</dbReference>
<dbReference type="PANTHER" id="PTHR30543:SF21">
    <property type="entry name" value="NAD(P)H-DEPENDENT FMN REDUCTASE LOT6"/>
    <property type="match status" value="1"/>
</dbReference>
<dbReference type="Pfam" id="PF03358">
    <property type="entry name" value="FMN_red"/>
    <property type="match status" value="1"/>
</dbReference>
<dbReference type="SUPFAM" id="SSF52218">
    <property type="entry name" value="Flavoproteins"/>
    <property type="match status" value="1"/>
</dbReference>
<comment type="function">
    <text evidence="1">Catalyzes the reductive cleavage of azo bond in aromatic azo compounds to the corresponding amines. Requires NADPH, but not NADH, as an electron donor for its activity (By similarity).</text>
</comment>
<comment type="cofactor">
    <cofactor evidence="1">
        <name>FMN</name>
        <dbReference type="ChEBI" id="CHEBI:58210"/>
    </cofactor>
</comment>
<comment type="subunit">
    <text evidence="1">Homotetramer.</text>
</comment>
<comment type="similarity">
    <text evidence="2">Belongs to the azoreductase type 2 family.</text>
</comment>
<organism>
    <name type="scientific">Staphylococcus haemolyticus (strain JCSC1435)</name>
    <dbReference type="NCBI Taxonomy" id="279808"/>
    <lineage>
        <taxon>Bacteria</taxon>
        <taxon>Bacillati</taxon>
        <taxon>Bacillota</taxon>
        <taxon>Bacilli</taxon>
        <taxon>Bacillales</taxon>
        <taxon>Staphylococcaceae</taxon>
        <taxon>Staphylococcus</taxon>
    </lineage>
</organism>
<feature type="chain" id="PRO_0000245999" description="FMN-dependent NADPH-azoreductase">
    <location>
        <begin position="1"/>
        <end position="188"/>
    </location>
</feature>
<reference key="1">
    <citation type="journal article" date="2005" name="J. Bacteriol.">
        <title>Whole-genome sequencing of Staphylococcus haemolyticus uncovers the extreme plasticity of its genome and the evolution of human-colonizing staphylococcal species.</title>
        <authorList>
            <person name="Takeuchi F."/>
            <person name="Watanabe S."/>
            <person name="Baba T."/>
            <person name="Yuzawa H."/>
            <person name="Ito T."/>
            <person name="Morimoto Y."/>
            <person name="Kuroda M."/>
            <person name="Cui L."/>
            <person name="Takahashi M."/>
            <person name="Ankai A."/>
            <person name="Baba S."/>
            <person name="Fukui S."/>
            <person name="Lee J.C."/>
            <person name="Hiramatsu K."/>
        </authorList>
    </citation>
    <scope>NUCLEOTIDE SEQUENCE [LARGE SCALE GENOMIC DNA]</scope>
    <source>
        <strain>JCSC1435</strain>
    </source>
</reference>
<keyword id="KW-0285">Flavoprotein</keyword>
<keyword id="KW-0288">FMN</keyword>
<keyword id="KW-0521">NADP</keyword>
<keyword id="KW-0560">Oxidoreductase</keyword>